<reference key="1">
    <citation type="submission" date="2008-02" db="EMBL/GenBank/DDBJ databases">
        <title>Complete sequence of Escherichia coli C str. ATCC 8739.</title>
        <authorList>
            <person name="Copeland A."/>
            <person name="Lucas S."/>
            <person name="Lapidus A."/>
            <person name="Glavina del Rio T."/>
            <person name="Dalin E."/>
            <person name="Tice H."/>
            <person name="Bruce D."/>
            <person name="Goodwin L."/>
            <person name="Pitluck S."/>
            <person name="Kiss H."/>
            <person name="Brettin T."/>
            <person name="Detter J.C."/>
            <person name="Han C."/>
            <person name="Kuske C.R."/>
            <person name="Schmutz J."/>
            <person name="Larimer F."/>
            <person name="Land M."/>
            <person name="Hauser L."/>
            <person name="Kyrpides N."/>
            <person name="Mikhailova N."/>
            <person name="Ingram L."/>
            <person name="Richardson P."/>
        </authorList>
    </citation>
    <scope>NUCLEOTIDE SEQUENCE [LARGE SCALE GENOMIC DNA]</scope>
    <source>
        <strain>ATCC 8739 / DSM 1576 / NBRC 3972 / NCIMB 8545 / WDCM 00012 / Crooks</strain>
    </source>
</reference>
<keyword id="KW-0285">Flavoprotein</keyword>
<keyword id="KW-0288">FMN</keyword>
<keyword id="KW-0560">Oxidoreductase</keyword>
<protein>
    <recommendedName>
        <fullName evidence="1">Anaerobic glycerol-3-phosphate dehydrogenase subunit B</fullName>
        <shortName evidence="1">Anaerobic G-3-P dehydrogenase subunit B</shortName>
        <shortName evidence="1">Anaerobic G3Pdhase B</shortName>
        <ecNumber evidence="1">1.1.5.3</ecNumber>
    </recommendedName>
</protein>
<organism>
    <name type="scientific">Escherichia coli (strain ATCC 8739 / DSM 1576 / NBRC 3972 / NCIMB 8545 / WDCM 00012 / Crooks)</name>
    <dbReference type="NCBI Taxonomy" id="481805"/>
    <lineage>
        <taxon>Bacteria</taxon>
        <taxon>Pseudomonadati</taxon>
        <taxon>Pseudomonadota</taxon>
        <taxon>Gammaproteobacteria</taxon>
        <taxon>Enterobacterales</taxon>
        <taxon>Enterobacteriaceae</taxon>
        <taxon>Escherichia</taxon>
    </lineage>
</organism>
<name>GLPB_ECOLC</name>
<proteinExistence type="inferred from homology"/>
<sequence>MRFDTVIMGGGLAGLLCGLQLQKHGLRCAIVTRGQSALHFSSGSLDLLSHLPDGQPVTDIHSGLESLRQQAPAHPYSLLEPQRVLDLACQAQALIAESGAQLQGSVELAHQRVTPLGTLRSTWLSSPEVPVWPLPAKKICVVGISGLMDFQAHLAAASLRELGLAVETAEIELPELDVLRNNATEFRAVNIARFLDNEENWPLLLDALIPVANTCEMILMPACFGLADDKLWRWLNEKLPCSLMLLPTLPPSVLGIRLQNQLQRQFVRQGGVWMPGDEVKKVTCKNGVVNEIWTRNHADIPLRPRFAVLASGSFFSGGLVAERNGIREPILGLDVLQTATRGEWYKGDFFAPQPWQQFGVTTDETLRPSQAGQTIENLFAIGSVLGGFDPIAQGCGGGVCAVSALHAAQQIAQRAGGQQ</sequence>
<feature type="chain" id="PRO_1000083501" description="Anaerobic glycerol-3-phosphate dehydrogenase subunit B">
    <location>
        <begin position="1"/>
        <end position="419"/>
    </location>
</feature>
<gene>
    <name evidence="1" type="primary">glpB</name>
    <name type="ordered locus">EcolC_1409</name>
</gene>
<dbReference type="EC" id="1.1.5.3" evidence="1"/>
<dbReference type="EMBL" id="CP000946">
    <property type="protein sequence ID" value="ACA77072.1"/>
    <property type="molecule type" value="Genomic_DNA"/>
</dbReference>
<dbReference type="RefSeq" id="WP_001209927.1">
    <property type="nucleotide sequence ID" value="NZ_MTFT01000028.1"/>
</dbReference>
<dbReference type="KEGG" id="ecl:EcolC_1409"/>
<dbReference type="HOGENOM" id="CLU_047793_0_0_6"/>
<dbReference type="UniPathway" id="UPA00618">
    <property type="reaction ID" value="UER00673"/>
</dbReference>
<dbReference type="GO" id="GO:0009331">
    <property type="term" value="C:glycerol-3-phosphate dehydrogenase (FAD) complex"/>
    <property type="evidence" value="ECO:0007669"/>
    <property type="project" value="InterPro"/>
</dbReference>
<dbReference type="GO" id="GO:0004368">
    <property type="term" value="F:glycerol-3-phosphate dehydrogenase (quinone) activity"/>
    <property type="evidence" value="ECO:0007669"/>
    <property type="project" value="UniProtKB-UniRule"/>
</dbReference>
<dbReference type="GO" id="GO:0009061">
    <property type="term" value="P:anaerobic respiration"/>
    <property type="evidence" value="ECO:0007669"/>
    <property type="project" value="TreeGrafter"/>
</dbReference>
<dbReference type="GO" id="GO:0019563">
    <property type="term" value="P:glycerol catabolic process"/>
    <property type="evidence" value="ECO:0007669"/>
    <property type="project" value="UniProtKB-UniRule"/>
</dbReference>
<dbReference type="GO" id="GO:0046168">
    <property type="term" value="P:glycerol-3-phosphate catabolic process"/>
    <property type="evidence" value="ECO:0007669"/>
    <property type="project" value="TreeGrafter"/>
</dbReference>
<dbReference type="Gene3D" id="3.50.50.60">
    <property type="entry name" value="FAD/NAD(P)-binding domain"/>
    <property type="match status" value="1"/>
</dbReference>
<dbReference type="HAMAP" id="MF_00753">
    <property type="entry name" value="Glycerol3P_GlpB"/>
    <property type="match status" value="1"/>
</dbReference>
<dbReference type="InterPro" id="IPR003953">
    <property type="entry name" value="FAD-dep_OxRdtase_2_FAD-bd"/>
</dbReference>
<dbReference type="InterPro" id="IPR050315">
    <property type="entry name" value="FAD-oxidoreductase_2"/>
</dbReference>
<dbReference type="InterPro" id="IPR036188">
    <property type="entry name" value="FAD/NAD-bd_sf"/>
</dbReference>
<dbReference type="InterPro" id="IPR009158">
    <property type="entry name" value="G3P_DH_GlpB_su"/>
</dbReference>
<dbReference type="NCBIfam" id="TIGR03378">
    <property type="entry name" value="glycerol3P_GlpB"/>
    <property type="match status" value="1"/>
</dbReference>
<dbReference type="NCBIfam" id="NF003718">
    <property type="entry name" value="PRK05329.1-1"/>
    <property type="match status" value="1"/>
</dbReference>
<dbReference type="NCBIfam" id="NF003719">
    <property type="entry name" value="PRK05329.1-2"/>
    <property type="match status" value="1"/>
</dbReference>
<dbReference type="NCBIfam" id="NF003720">
    <property type="entry name" value="PRK05329.1-3"/>
    <property type="match status" value="1"/>
</dbReference>
<dbReference type="PANTHER" id="PTHR43400:SF11">
    <property type="entry name" value="ANAEROBIC GLYCEROL-3-PHOSPHATE DEHYDROGENASE SUBUNIT B"/>
    <property type="match status" value="1"/>
</dbReference>
<dbReference type="PANTHER" id="PTHR43400">
    <property type="entry name" value="FUMARATE REDUCTASE"/>
    <property type="match status" value="1"/>
</dbReference>
<dbReference type="Pfam" id="PF00890">
    <property type="entry name" value="FAD_binding_2"/>
    <property type="match status" value="1"/>
</dbReference>
<dbReference type="PIRSF" id="PIRSF000141">
    <property type="entry name" value="Anaerobic_G3P_dh"/>
    <property type="match status" value="1"/>
</dbReference>
<dbReference type="SUPFAM" id="SSF51905">
    <property type="entry name" value="FAD/NAD(P)-binding domain"/>
    <property type="match status" value="1"/>
</dbReference>
<comment type="function">
    <text evidence="1">Conversion of glycerol 3-phosphate to dihydroxyacetone. Uses fumarate or nitrate as electron acceptor.</text>
</comment>
<comment type="catalytic activity">
    <reaction evidence="1">
        <text>a quinone + sn-glycerol 3-phosphate = dihydroxyacetone phosphate + a quinol</text>
        <dbReference type="Rhea" id="RHEA:18977"/>
        <dbReference type="ChEBI" id="CHEBI:24646"/>
        <dbReference type="ChEBI" id="CHEBI:57597"/>
        <dbReference type="ChEBI" id="CHEBI:57642"/>
        <dbReference type="ChEBI" id="CHEBI:132124"/>
        <dbReference type="EC" id="1.1.5.3"/>
    </reaction>
</comment>
<comment type="cofactor">
    <cofactor evidence="1">
        <name>FMN</name>
        <dbReference type="ChEBI" id="CHEBI:58210"/>
    </cofactor>
</comment>
<comment type="pathway">
    <text evidence="1">Polyol metabolism; glycerol degradation via glycerol kinase pathway; glycerone phosphate from sn-glycerol 3-phosphate (anaerobic route): step 1/1.</text>
</comment>
<comment type="subunit">
    <text evidence="1">Composed of a catalytic GlpA/B dimer and of membrane bound GlpC.</text>
</comment>
<comment type="similarity">
    <text evidence="1">Belongs to the anaerobic G-3-P dehydrogenase subunit B family.</text>
</comment>
<accession>B1IXU6</accession>
<evidence type="ECO:0000255" key="1">
    <source>
        <dbReference type="HAMAP-Rule" id="MF_00753"/>
    </source>
</evidence>